<feature type="transit peptide" description="Mitochondrion" evidence="1">
    <location>
        <begin position="1"/>
        <end position="31"/>
    </location>
</feature>
<feature type="chain" id="PRO_0000413295" description="Glutamyl-tRNA(Gln) amidotransferase subunit C, mitochondrial">
    <location>
        <begin position="32"/>
        <end position="178"/>
    </location>
</feature>
<feature type="region of interest" description="Disordered" evidence="2">
    <location>
        <begin position="26"/>
        <end position="67"/>
    </location>
</feature>
<feature type="compositionally biased region" description="Basic and acidic residues" evidence="2">
    <location>
        <begin position="37"/>
        <end position="46"/>
    </location>
</feature>
<reference key="1">
    <citation type="journal article" date="2007" name="Science">
        <title>Genome sequence of Aedes aegypti, a major arbovirus vector.</title>
        <authorList>
            <person name="Nene V."/>
            <person name="Wortman J.R."/>
            <person name="Lawson D."/>
            <person name="Haas B.J."/>
            <person name="Kodira C.D."/>
            <person name="Tu Z.J."/>
            <person name="Loftus B.J."/>
            <person name="Xi Z."/>
            <person name="Megy K."/>
            <person name="Grabherr M."/>
            <person name="Ren Q."/>
            <person name="Zdobnov E.M."/>
            <person name="Lobo N.F."/>
            <person name="Campbell K.S."/>
            <person name="Brown S.E."/>
            <person name="Bonaldo M.F."/>
            <person name="Zhu J."/>
            <person name="Sinkins S.P."/>
            <person name="Hogenkamp D.G."/>
            <person name="Amedeo P."/>
            <person name="Arensburger P."/>
            <person name="Atkinson P.W."/>
            <person name="Bidwell S.L."/>
            <person name="Biedler J."/>
            <person name="Birney E."/>
            <person name="Bruggner R.V."/>
            <person name="Costas J."/>
            <person name="Coy M.R."/>
            <person name="Crabtree J."/>
            <person name="Crawford M."/>
            <person name="DeBruyn B."/>
            <person name="DeCaprio D."/>
            <person name="Eiglmeier K."/>
            <person name="Eisenstadt E."/>
            <person name="El-Dorry H."/>
            <person name="Gelbart W.M."/>
            <person name="Gomes S.L."/>
            <person name="Hammond M."/>
            <person name="Hannick L.I."/>
            <person name="Hogan J.R."/>
            <person name="Holmes M.H."/>
            <person name="Jaffe D."/>
            <person name="Johnston S.J."/>
            <person name="Kennedy R.C."/>
            <person name="Koo H."/>
            <person name="Kravitz S."/>
            <person name="Kriventseva E.V."/>
            <person name="Kulp D."/>
            <person name="Labutti K."/>
            <person name="Lee E."/>
            <person name="Li S."/>
            <person name="Lovin D.D."/>
            <person name="Mao C."/>
            <person name="Mauceli E."/>
            <person name="Menck C.F."/>
            <person name="Miller J.R."/>
            <person name="Montgomery P."/>
            <person name="Mori A."/>
            <person name="Nascimento A.L."/>
            <person name="Naveira H.F."/>
            <person name="Nusbaum C."/>
            <person name="O'Leary S.B."/>
            <person name="Orvis J."/>
            <person name="Pertea M."/>
            <person name="Quesneville H."/>
            <person name="Reidenbach K.R."/>
            <person name="Rogers Y.-H.C."/>
            <person name="Roth C.W."/>
            <person name="Schneider J.R."/>
            <person name="Schatz M."/>
            <person name="Shumway M."/>
            <person name="Stanke M."/>
            <person name="Stinson E.O."/>
            <person name="Tubio J.M.C."/>
            <person name="Vanzee J.P."/>
            <person name="Verjovski-Almeida S."/>
            <person name="Werner D."/>
            <person name="White O.R."/>
            <person name="Wyder S."/>
            <person name="Zeng Q."/>
            <person name="Zhao Q."/>
            <person name="Zhao Y."/>
            <person name="Hill C.A."/>
            <person name="Raikhel A.S."/>
            <person name="Soares M.B."/>
            <person name="Knudson D.L."/>
            <person name="Lee N.H."/>
            <person name="Galagan J."/>
            <person name="Salzberg S.L."/>
            <person name="Paulsen I.T."/>
            <person name="Dimopoulos G."/>
            <person name="Collins F.H."/>
            <person name="Bruce B."/>
            <person name="Fraser-Liggett C.M."/>
            <person name="Severson D.W."/>
        </authorList>
    </citation>
    <scope>NUCLEOTIDE SEQUENCE [LARGE SCALE GENOMIC DNA]</scope>
    <source>
        <strain>LVPib12</strain>
    </source>
</reference>
<sequence>MFRHIFTLGPRSISAITVRSRRALSSTAKPVSAPVTSDDRPNLDVKHLKHPTKVPQQPHKSDIDRRQEPVPRISVDDQTVQLLERLSLVDLDSKEAHRTLEDSIEFASRILAIDTDGVEPLYTVLEKQKLALREDVVSDGNLQEDVLSNARITEEEYFVAPPGNIPLEQDSSGNKHKQ</sequence>
<comment type="function">
    <text evidence="1">Allows the formation of correctly charged Gln-tRNA(Gln) through the transamidation of misacylated Glu-tRNA(Gln) in the mitochondria. The reaction takes place in the presence of glutamine and ATP through an activated gamma-phospho-Glu-tRNA(Gln).</text>
</comment>
<comment type="catalytic activity">
    <reaction evidence="1">
        <text>L-glutamyl-tRNA(Gln) + L-glutamine + ATP + H2O = L-glutaminyl-tRNA(Gln) + L-glutamate + ADP + phosphate + H(+)</text>
        <dbReference type="Rhea" id="RHEA:17521"/>
        <dbReference type="Rhea" id="RHEA-COMP:9681"/>
        <dbReference type="Rhea" id="RHEA-COMP:9684"/>
        <dbReference type="ChEBI" id="CHEBI:15377"/>
        <dbReference type="ChEBI" id="CHEBI:15378"/>
        <dbReference type="ChEBI" id="CHEBI:29985"/>
        <dbReference type="ChEBI" id="CHEBI:30616"/>
        <dbReference type="ChEBI" id="CHEBI:43474"/>
        <dbReference type="ChEBI" id="CHEBI:58359"/>
        <dbReference type="ChEBI" id="CHEBI:78520"/>
        <dbReference type="ChEBI" id="CHEBI:78521"/>
        <dbReference type="ChEBI" id="CHEBI:456216"/>
    </reaction>
</comment>
<comment type="subunit">
    <text evidence="1">Subunit of the heterotrimeric GatCAB amidotransferase (AdT) complex, composed of A, B and C subunits.</text>
</comment>
<comment type="subcellular location">
    <subcellularLocation>
        <location evidence="1">Mitochondrion</location>
    </subcellularLocation>
</comment>
<comment type="similarity">
    <text evidence="1">Belongs to the GatC family.</text>
</comment>
<gene>
    <name type="ORF">AAEL011360</name>
</gene>
<protein>
    <recommendedName>
        <fullName evidence="1">Glutamyl-tRNA(Gln) amidotransferase subunit C, mitochondrial</fullName>
        <shortName evidence="1">Glu-AdT subunit C</shortName>
        <ecNumber evidence="1">6.3.5.-</ecNumber>
    </recommendedName>
</protein>
<name>GATC_AEDAE</name>
<accession>Q16Q94</accession>
<proteinExistence type="inferred from homology"/>
<keyword id="KW-0067">ATP-binding</keyword>
<keyword id="KW-0436">Ligase</keyword>
<keyword id="KW-0496">Mitochondrion</keyword>
<keyword id="KW-0547">Nucleotide-binding</keyword>
<keyword id="KW-0648">Protein biosynthesis</keyword>
<keyword id="KW-1185">Reference proteome</keyword>
<keyword id="KW-0809">Transit peptide</keyword>
<evidence type="ECO:0000255" key="1">
    <source>
        <dbReference type="HAMAP-Rule" id="MF_03149"/>
    </source>
</evidence>
<evidence type="ECO:0000256" key="2">
    <source>
        <dbReference type="SAM" id="MobiDB-lite"/>
    </source>
</evidence>
<organism>
    <name type="scientific">Aedes aegypti</name>
    <name type="common">Yellowfever mosquito</name>
    <name type="synonym">Culex aegypti</name>
    <dbReference type="NCBI Taxonomy" id="7159"/>
    <lineage>
        <taxon>Eukaryota</taxon>
        <taxon>Metazoa</taxon>
        <taxon>Ecdysozoa</taxon>
        <taxon>Arthropoda</taxon>
        <taxon>Hexapoda</taxon>
        <taxon>Insecta</taxon>
        <taxon>Pterygota</taxon>
        <taxon>Neoptera</taxon>
        <taxon>Endopterygota</taxon>
        <taxon>Diptera</taxon>
        <taxon>Nematocera</taxon>
        <taxon>Culicoidea</taxon>
        <taxon>Culicidae</taxon>
        <taxon>Culicinae</taxon>
        <taxon>Aedini</taxon>
        <taxon>Aedes</taxon>
        <taxon>Stegomyia</taxon>
    </lineage>
</organism>
<dbReference type="EC" id="6.3.5.-" evidence="1"/>
<dbReference type="EMBL" id="CH477756">
    <property type="protein sequence ID" value="EAT36567.1"/>
    <property type="molecule type" value="Genomic_DNA"/>
</dbReference>
<dbReference type="RefSeq" id="XP_001655301.1">
    <property type="nucleotide sequence ID" value="XM_001655251.1"/>
</dbReference>
<dbReference type="SMR" id="Q16Q94"/>
<dbReference type="FunCoup" id="Q16Q94">
    <property type="interactions" value="1100"/>
</dbReference>
<dbReference type="STRING" id="7159.Q16Q94"/>
<dbReference type="PaxDb" id="7159-AAEL011360-PA"/>
<dbReference type="eggNOG" id="KOG4247">
    <property type="taxonomic scope" value="Eukaryota"/>
</dbReference>
<dbReference type="HOGENOM" id="CLU_105899_0_1_1"/>
<dbReference type="InParanoid" id="Q16Q94"/>
<dbReference type="OMA" id="RCAKRTD"/>
<dbReference type="PhylomeDB" id="Q16Q94"/>
<dbReference type="Proteomes" id="UP000008820">
    <property type="component" value="Unassembled WGS sequence"/>
</dbReference>
<dbReference type="Proteomes" id="UP000682892">
    <property type="component" value="Chromosome 1"/>
</dbReference>
<dbReference type="GO" id="GO:0030956">
    <property type="term" value="C:glutamyl-tRNA(Gln) amidotransferase complex"/>
    <property type="evidence" value="ECO:0007669"/>
    <property type="project" value="UniProtKB-UniRule"/>
</dbReference>
<dbReference type="GO" id="GO:0005739">
    <property type="term" value="C:mitochondrion"/>
    <property type="evidence" value="ECO:0007669"/>
    <property type="project" value="UniProtKB-SubCell"/>
</dbReference>
<dbReference type="GO" id="GO:0005524">
    <property type="term" value="F:ATP binding"/>
    <property type="evidence" value="ECO:0007669"/>
    <property type="project" value="UniProtKB-KW"/>
</dbReference>
<dbReference type="GO" id="GO:0050567">
    <property type="term" value="F:glutaminyl-tRNA synthase (glutamine-hydrolyzing) activity"/>
    <property type="evidence" value="ECO:0007669"/>
    <property type="project" value="UniProtKB-UniRule"/>
</dbReference>
<dbReference type="GO" id="GO:0070681">
    <property type="term" value="P:glutaminyl-tRNAGln biosynthesis via transamidation"/>
    <property type="evidence" value="ECO:0007669"/>
    <property type="project" value="UniProtKB-UniRule"/>
</dbReference>
<dbReference type="GO" id="GO:0032543">
    <property type="term" value="P:mitochondrial translation"/>
    <property type="evidence" value="ECO:0007669"/>
    <property type="project" value="UniProtKB-UniRule"/>
</dbReference>
<dbReference type="GO" id="GO:0006450">
    <property type="term" value="P:regulation of translational fidelity"/>
    <property type="evidence" value="ECO:0007669"/>
    <property type="project" value="InterPro"/>
</dbReference>
<dbReference type="HAMAP" id="MF_00122">
    <property type="entry name" value="GatC"/>
    <property type="match status" value="1"/>
</dbReference>
<dbReference type="InterPro" id="IPR036113">
    <property type="entry name" value="Asp/Glu-ADT_sf_sub_c"/>
</dbReference>
<dbReference type="InterPro" id="IPR003837">
    <property type="entry name" value="GatC"/>
</dbReference>
<dbReference type="NCBIfam" id="TIGR00135">
    <property type="entry name" value="gatC"/>
    <property type="match status" value="1"/>
</dbReference>
<dbReference type="PANTHER" id="PTHR15004">
    <property type="entry name" value="GLUTAMYL-TRNA(GLN) AMIDOTRANSFERASE SUBUNIT C, MITOCHONDRIAL"/>
    <property type="match status" value="1"/>
</dbReference>
<dbReference type="PANTHER" id="PTHR15004:SF0">
    <property type="entry name" value="GLUTAMYL-TRNA(GLN) AMIDOTRANSFERASE SUBUNIT C, MITOCHONDRIAL"/>
    <property type="match status" value="1"/>
</dbReference>
<dbReference type="Pfam" id="PF02686">
    <property type="entry name" value="GatC"/>
    <property type="match status" value="1"/>
</dbReference>
<dbReference type="SUPFAM" id="SSF141000">
    <property type="entry name" value="Glu-tRNAGln amidotransferase C subunit"/>
    <property type="match status" value="1"/>
</dbReference>